<proteinExistence type="inferred from homology"/>
<feature type="chain" id="PRO_1000190264" description="Low affinity potassium transport system protein Kup">
    <location>
        <begin position="1"/>
        <end position="622"/>
    </location>
</feature>
<feature type="transmembrane region" description="Helical" evidence="1">
    <location>
        <begin position="9"/>
        <end position="29"/>
    </location>
</feature>
<feature type="transmembrane region" description="Helical" evidence="1">
    <location>
        <begin position="49"/>
        <end position="69"/>
    </location>
</feature>
<feature type="transmembrane region" description="Helical" evidence="1">
    <location>
        <begin position="103"/>
        <end position="123"/>
    </location>
</feature>
<feature type="transmembrane region" description="Helical" evidence="1">
    <location>
        <begin position="137"/>
        <end position="157"/>
    </location>
</feature>
<feature type="transmembrane region" description="Helical" evidence="1">
    <location>
        <begin position="165"/>
        <end position="185"/>
    </location>
</feature>
<feature type="transmembrane region" description="Helical" evidence="1">
    <location>
        <begin position="213"/>
        <end position="233"/>
    </location>
</feature>
<feature type="transmembrane region" description="Helical" evidence="1">
    <location>
        <begin position="247"/>
        <end position="267"/>
    </location>
</feature>
<feature type="transmembrane region" description="Helical" evidence="1">
    <location>
        <begin position="276"/>
        <end position="296"/>
    </location>
</feature>
<feature type="transmembrane region" description="Helical" evidence="1">
    <location>
        <begin position="337"/>
        <end position="357"/>
    </location>
</feature>
<feature type="transmembrane region" description="Helical" evidence="1">
    <location>
        <begin position="363"/>
        <end position="383"/>
    </location>
</feature>
<feature type="transmembrane region" description="Helical" evidence="1">
    <location>
        <begin position="396"/>
        <end position="416"/>
    </location>
</feature>
<feature type="transmembrane region" description="Helical" evidence="1">
    <location>
        <begin position="419"/>
        <end position="439"/>
    </location>
</feature>
<accession>B1LL74</accession>
<sequence>MSTDNKQSLPAITLAAIGVVYGDIGTSPLYTLRECLSGQFGFGVERDAVFGFLSLIFWLLIFVVSIKYLTFVMRADNAGEGGILTLMSLAGRNTSARTTSMLVIMGLIGGSFFYGEVVITPAISVMSAIEGLEIVAPQLDTWIVPLSIIVLTLLFMIQKHGTAMVGKLFAPIMLTWFLILAGLGLRSIIANPEVLHALNPMWAVHFFLEYKTVSFIALGAVVLSITGVEALYADMGHFGKFPIRLAWFTVVLPSLTLNYFGQGALLLKNPEAIKNPFFLLAPDWALIPLLIIAALATVIASQAVISGVFSLTRQAVRLGYLSPMRIIHTSEMESGQIYIPFVNWMLYVAVVIVIVSFEHSSNLAAAYGIAVTGTMVLTSILSTTVARQNWHWNKYFVALILIAFLCVDIPLFTANLDKLLSGGWLPLSLGTVMFIVMTTWKSERFRLLRRMHEHGNSLEAMIASLEKSPPVRVPGTAVYMSRAINVIPFALMHNLKHNKVLHERVILLTLRTEDAPYVHNVRRVQIEQLSPTFWRVVASYGWRETPNVEEVFHRCGLEGLSCRMMETSFFMSHESLILGKRPWYLRLRGKLYLLLQRNALRAPDQFEIPPNRVIELGTQVEI</sequence>
<reference key="1">
    <citation type="journal article" date="2008" name="J. Bacteriol.">
        <title>Insights into the environmental resistance gene pool from the genome sequence of the multidrug-resistant environmental isolate Escherichia coli SMS-3-5.</title>
        <authorList>
            <person name="Fricke W.F."/>
            <person name="Wright M.S."/>
            <person name="Lindell A.H."/>
            <person name="Harkins D.M."/>
            <person name="Baker-Austin C."/>
            <person name="Ravel J."/>
            <person name="Stepanauskas R."/>
        </authorList>
    </citation>
    <scope>NUCLEOTIDE SEQUENCE [LARGE SCALE GENOMIC DNA]</scope>
    <source>
        <strain>SMS-3-5 / SECEC</strain>
    </source>
</reference>
<evidence type="ECO:0000255" key="1">
    <source>
        <dbReference type="HAMAP-Rule" id="MF_01522"/>
    </source>
</evidence>
<comment type="function">
    <text evidence="1">Responsible for the low-affinity transport of potassium into the cell. Likely operates as a K(+):H(+) symporter.</text>
</comment>
<comment type="catalytic activity">
    <reaction evidence="1">
        <text>K(+)(in) + H(+)(in) = K(+)(out) + H(+)(out)</text>
        <dbReference type="Rhea" id="RHEA:28490"/>
        <dbReference type="ChEBI" id="CHEBI:15378"/>
        <dbReference type="ChEBI" id="CHEBI:29103"/>
    </reaction>
    <physiologicalReaction direction="right-to-left" evidence="1">
        <dbReference type="Rhea" id="RHEA:28492"/>
    </physiologicalReaction>
</comment>
<comment type="subcellular location">
    <subcellularLocation>
        <location evidence="1">Cell inner membrane</location>
        <topology evidence="1">Multi-pass membrane protein</topology>
    </subcellularLocation>
</comment>
<comment type="similarity">
    <text evidence="1">Belongs to the HAK/KUP transporter (TC 2.A.72) family.</text>
</comment>
<keyword id="KW-0997">Cell inner membrane</keyword>
<keyword id="KW-1003">Cell membrane</keyword>
<keyword id="KW-0406">Ion transport</keyword>
<keyword id="KW-0472">Membrane</keyword>
<keyword id="KW-0630">Potassium</keyword>
<keyword id="KW-0633">Potassium transport</keyword>
<keyword id="KW-0769">Symport</keyword>
<keyword id="KW-0812">Transmembrane</keyword>
<keyword id="KW-1133">Transmembrane helix</keyword>
<keyword id="KW-0813">Transport</keyword>
<name>KUP_ECOSM</name>
<organism>
    <name type="scientific">Escherichia coli (strain SMS-3-5 / SECEC)</name>
    <dbReference type="NCBI Taxonomy" id="439855"/>
    <lineage>
        <taxon>Bacteria</taxon>
        <taxon>Pseudomonadati</taxon>
        <taxon>Pseudomonadota</taxon>
        <taxon>Gammaproteobacteria</taxon>
        <taxon>Enterobacterales</taxon>
        <taxon>Enterobacteriaceae</taxon>
        <taxon>Escherichia</taxon>
    </lineage>
</organism>
<dbReference type="EMBL" id="CP000970">
    <property type="protein sequence ID" value="ACB18883.1"/>
    <property type="molecule type" value="Genomic_DNA"/>
</dbReference>
<dbReference type="RefSeq" id="WP_000102319.1">
    <property type="nucleotide sequence ID" value="NC_010498.1"/>
</dbReference>
<dbReference type="GeneID" id="75205465"/>
<dbReference type="KEGG" id="ecm:EcSMS35_4115"/>
<dbReference type="HOGENOM" id="CLU_008142_4_2_6"/>
<dbReference type="Proteomes" id="UP000007011">
    <property type="component" value="Chromosome"/>
</dbReference>
<dbReference type="GO" id="GO:0005886">
    <property type="term" value="C:plasma membrane"/>
    <property type="evidence" value="ECO:0007669"/>
    <property type="project" value="UniProtKB-SubCell"/>
</dbReference>
<dbReference type="GO" id="GO:0015079">
    <property type="term" value="F:potassium ion transmembrane transporter activity"/>
    <property type="evidence" value="ECO:0007669"/>
    <property type="project" value="UniProtKB-UniRule"/>
</dbReference>
<dbReference type="GO" id="GO:0015293">
    <property type="term" value="F:symporter activity"/>
    <property type="evidence" value="ECO:0007669"/>
    <property type="project" value="UniProtKB-UniRule"/>
</dbReference>
<dbReference type="HAMAP" id="MF_01522">
    <property type="entry name" value="Kup"/>
    <property type="match status" value="1"/>
</dbReference>
<dbReference type="InterPro" id="IPR003855">
    <property type="entry name" value="K+_transporter"/>
</dbReference>
<dbReference type="InterPro" id="IPR053952">
    <property type="entry name" value="K_trans_C"/>
</dbReference>
<dbReference type="InterPro" id="IPR053951">
    <property type="entry name" value="K_trans_N"/>
</dbReference>
<dbReference type="InterPro" id="IPR023051">
    <property type="entry name" value="Kup"/>
</dbReference>
<dbReference type="NCBIfam" id="TIGR00794">
    <property type="entry name" value="kup"/>
    <property type="match status" value="1"/>
</dbReference>
<dbReference type="NCBIfam" id="NF008015">
    <property type="entry name" value="PRK10745.1"/>
    <property type="match status" value="1"/>
</dbReference>
<dbReference type="PANTHER" id="PTHR30540:SF79">
    <property type="entry name" value="LOW AFFINITY POTASSIUM TRANSPORT SYSTEM PROTEIN KUP"/>
    <property type="match status" value="1"/>
</dbReference>
<dbReference type="PANTHER" id="PTHR30540">
    <property type="entry name" value="OSMOTIC STRESS POTASSIUM TRANSPORTER"/>
    <property type="match status" value="1"/>
</dbReference>
<dbReference type="Pfam" id="PF02705">
    <property type="entry name" value="K_trans"/>
    <property type="match status" value="1"/>
</dbReference>
<dbReference type="Pfam" id="PF22776">
    <property type="entry name" value="K_trans_C"/>
    <property type="match status" value="1"/>
</dbReference>
<protein>
    <recommendedName>
        <fullName evidence="1">Low affinity potassium transport system protein Kup</fullName>
    </recommendedName>
    <alternativeName>
        <fullName evidence="1">Kup system potassium uptake protein</fullName>
    </alternativeName>
</protein>
<gene>
    <name evidence="1" type="primary">kup</name>
    <name type="ordered locus">EcSMS35_4115</name>
</gene>